<evidence type="ECO:0000255" key="1"/>
<evidence type="ECO:0000256" key="2">
    <source>
        <dbReference type="SAM" id="MobiDB-lite"/>
    </source>
</evidence>
<evidence type="ECO:0000269" key="3">
    <source>
    </source>
</evidence>
<evidence type="ECO:0000269" key="4">
    <source>
    </source>
</evidence>
<evidence type="ECO:0000269" key="5">
    <source>
    </source>
</evidence>
<evidence type="ECO:0000303" key="6">
    <source>
    </source>
</evidence>
<evidence type="ECO:0000303" key="7">
    <source>
    </source>
</evidence>
<evidence type="ECO:0000305" key="8"/>
<evidence type="ECO:0007829" key="9">
    <source>
        <dbReference type="PDB" id="8GY7"/>
    </source>
</evidence>
<dbReference type="EMBL" id="AF483549">
    <property type="protein sequence ID" value="AAL86908.1"/>
    <property type="molecule type" value="mRNA"/>
</dbReference>
<dbReference type="EMBL" id="AY079152">
    <property type="protein sequence ID" value="AAL80042.1"/>
    <property type="molecule type" value="mRNA"/>
</dbReference>
<dbReference type="EMBL" id="AF454915">
    <property type="protein sequence ID" value="AAL51048.1"/>
    <property type="molecule type" value="mRNA"/>
</dbReference>
<dbReference type="EMBL" id="AF454916">
    <property type="protein sequence ID" value="AAL51049.1"/>
    <property type="molecule type" value="mRNA"/>
</dbReference>
<dbReference type="EMBL" id="BC062721">
    <property type="protein sequence ID" value="AAH62721.1"/>
    <property type="molecule type" value="mRNA"/>
</dbReference>
<dbReference type="CCDS" id="CCDS13612.1">
    <molecule id="Q8TCY5-2"/>
</dbReference>
<dbReference type="CCDS" id="CCDS13613.1">
    <molecule id="Q8TCY5-4"/>
</dbReference>
<dbReference type="RefSeq" id="NP_001272323.1">
    <molecule id="Q8TCY5-3"/>
    <property type="nucleotide sequence ID" value="NM_001285394.2"/>
</dbReference>
<dbReference type="RefSeq" id="NP_001366157.1">
    <molecule id="Q8TCY5-4"/>
    <property type="nucleotide sequence ID" value="NM_001379228.1"/>
</dbReference>
<dbReference type="RefSeq" id="NP_848932.1">
    <molecule id="Q8TCY5-4"/>
    <property type="nucleotide sequence ID" value="NM_178817.4"/>
</dbReference>
<dbReference type="RefSeq" id="NP_996781.1">
    <molecule id="Q8TCY5-2"/>
    <property type="nucleotide sequence ID" value="NM_206898.2"/>
</dbReference>
<dbReference type="RefSeq" id="XP_006724091.1">
    <property type="nucleotide sequence ID" value="XM_006724028.3"/>
</dbReference>
<dbReference type="RefSeq" id="XP_016883896.1">
    <property type="nucleotide sequence ID" value="XM_017028407.1"/>
</dbReference>
<dbReference type="PDB" id="8GY7">
    <property type="method" value="EM"/>
    <property type="resolution" value="3.30 A"/>
    <property type="chains" value="P=1-172"/>
</dbReference>
<dbReference type="PDBsum" id="8GY7"/>
<dbReference type="EMDB" id="EMD-34371"/>
<dbReference type="SMR" id="Q8TCY5"/>
<dbReference type="BioGRID" id="121114">
    <property type="interactions" value="4"/>
</dbReference>
<dbReference type="CORUM" id="Q8TCY5"/>
<dbReference type="DIP" id="DIP-29948N"/>
<dbReference type="FunCoup" id="Q8TCY5">
    <property type="interactions" value="25"/>
</dbReference>
<dbReference type="IntAct" id="Q8TCY5">
    <property type="interactions" value="9"/>
</dbReference>
<dbReference type="MINT" id="Q8TCY5"/>
<dbReference type="STRING" id="9606.ENSP00000382684"/>
<dbReference type="iPTMnet" id="Q8TCY5"/>
<dbReference type="PhosphoSitePlus" id="Q8TCY5"/>
<dbReference type="BioMuta" id="MRAP"/>
<dbReference type="DMDM" id="116242634"/>
<dbReference type="MassIVE" id="Q8TCY5"/>
<dbReference type="PaxDb" id="9606-ENSP00000382684"/>
<dbReference type="PeptideAtlas" id="Q8TCY5"/>
<dbReference type="ProteomicsDB" id="74194">
    <molecule id="Q8TCY5-3"/>
</dbReference>
<dbReference type="Antibodypedia" id="22543">
    <property type="antibodies" value="152 antibodies from 28 providers"/>
</dbReference>
<dbReference type="DNASU" id="56246"/>
<dbReference type="Ensembl" id="ENST00000303645.10">
    <molecule id="Q8TCY5-4"/>
    <property type="protein sequence ID" value="ENSP00000306697.5"/>
    <property type="gene ID" value="ENSG00000170262.13"/>
</dbReference>
<dbReference type="Ensembl" id="ENST00000339944.4">
    <molecule id="Q8TCY5-2"/>
    <property type="protein sequence ID" value="ENSP00000343661.4"/>
    <property type="gene ID" value="ENSG00000170262.13"/>
</dbReference>
<dbReference type="Ensembl" id="ENST00000399784.6">
    <molecule id="Q8TCY5-4"/>
    <property type="protein sequence ID" value="ENSP00000382684.2"/>
    <property type="gene ID" value="ENSG00000170262.13"/>
</dbReference>
<dbReference type="GeneID" id="56246"/>
<dbReference type="KEGG" id="hsa:56246"/>
<dbReference type="MANE-Select" id="ENST00000303645.10">
    <property type="protein sequence ID" value="ENSP00000306697.5"/>
    <property type="RefSeq nucleotide sequence ID" value="NM_001379228.1"/>
    <property type="RefSeq protein sequence ID" value="NP_001366157.1"/>
</dbReference>
<dbReference type="UCSC" id="uc002ypj.4">
    <molecule id="Q8TCY5-4"/>
    <property type="organism name" value="human"/>
</dbReference>
<dbReference type="AGR" id="HGNC:1304"/>
<dbReference type="CTD" id="56246"/>
<dbReference type="DisGeNET" id="56246"/>
<dbReference type="GeneCards" id="MRAP"/>
<dbReference type="HGNC" id="HGNC:1304">
    <property type="gene designation" value="MRAP"/>
</dbReference>
<dbReference type="HPA" id="ENSG00000170262">
    <property type="expression patterns" value="Group enriched (adipose tissue, adrenal gland, breast)"/>
</dbReference>
<dbReference type="MalaCards" id="MRAP"/>
<dbReference type="MIM" id="607398">
    <property type="type" value="phenotype"/>
</dbReference>
<dbReference type="MIM" id="609196">
    <property type="type" value="gene"/>
</dbReference>
<dbReference type="neXtProt" id="NX_Q8TCY5"/>
<dbReference type="OpenTargets" id="ENSG00000170262"/>
<dbReference type="Orphanet" id="361">
    <property type="disease" value="Familial glucocorticoid deficiency"/>
</dbReference>
<dbReference type="PharmGKB" id="PA25856"/>
<dbReference type="VEuPathDB" id="HostDB:ENSG00000170262"/>
<dbReference type="eggNOG" id="ENOG502SB3E">
    <property type="taxonomic scope" value="Eukaryota"/>
</dbReference>
<dbReference type="GeneTree" id="ENSGT00650000093475"/>
<dbReference type="HOGENOM" id="CLU_133578_0_0_1"/>
<dbReference type="InParanoid" id="Q8TCY5"/>
<dbReference type="OMA" id="CHREPLG"/>
<dbReference type="OrthoDB" id="9946598at2759"/>
<dbReference type="PAN-GO" id="Q8TCY5">
    <property type="GO annotations" value="10 GO annotations based on evolutionary models"/>
</dbReference>
<dbReference type="PhylomeDB" id="Q8TCY5"/>
<dbReference type="TreeFam" id="TF338691"/>
<dbReference type="PathwayCommons" id="Q8TCY5"/>
<dbReference type="SignaLink" id="Q8TCY5"/>
<dbReference type="SIGNOR" id="Q8TCY5"/>
<dbReference type="BioGRID-ORCS" id="56246">
    <property type="hits" value="10 hits in 1140 CRISPR screens"/>
</dbReference>
<dbReference type="ChiTaRS" id="MRAP">
    <property type="organism name" value="human"/>
</dbReference>
<dbReference type="GenomeRNAi" id="56246"/>
<dbReference type="Pharos" id="Q8TCY5">
    <property type="development level" value="Tbio"/>
</dbReference>
<dbReference type="PRO" id="PR:Q8TCY5"/>
<dbReference type="Proteomes" id="UP000005640">
    <property type="component" value="Chromosome 21"/>
</dbReference>
<dbReference type="RNAct" id="Q8TCY5">
    <property type="molecule type" value="protein"/>
</dbReference>
<dbReference type="Bgee" id="ENSG00000170262">
    <property type="expression patterns" value="Expressed in right adrenal gland and 104 other cell types or tissues"/>
</dbReference>
<dbReference type="GO" id="GO:0005783">
    <property type="term" value="C:endoplasmic reticulum"/>
    <property type="evidence" value="ECO:0000314"/>
    <property type="project" value="BHF-UCL"/>
</dbReference>
<dbReference type="GO" id="GO:0005789">
    <property type="term" value="C:endoplasmic reticulum membrane"/>
    <property type="evidence" value="ECO:0007669"/>
    <property type="project" value="UniProtKB-SubCell"/>
</dbReference>
<dbReference type="GO" id="GO:0043231">
    <property type="term" value="C:intracellular membrane-bounded organelle"/>
    <property type="evidence" value="ECO:0000314"/>
    <property type="project" value="HPA"/>
</dbReference>
<dbReference type="GO" id="GO:0005886">
    <property type="term" value="C:plasma membrane"/>
    <property type="evidence" value="ECO:0000314"/>
    <property type="project" value="BHF-UCL"/>
</dbReference>
<dbReference type="GO" id="GO:0031780">
    <property type="term" value="F:corticotropin hormone receptor binding"/>
    <property type="evidence" value="ECO:0000353"/>
    <property type="project" value="BHF-UCL"/>
</dbReference>
<dbReference type="GO" id="GO:0042802">
    <property type="term" value="F:identical protein binding"/>
    <property type="evidence" value="ECO:0000353"/>
    <property type="project" value="IntAct"/>
</dbReference>
<dbReference type="GO" id="GO:0030545">
    <property type="term" value="F:signaling receptor regulator activity"/>
    <property type="evidence" value="ECO:0000318"/>
    <property type="project" value="GO_Central"/>
</dbReference>
<dbReference type="GO" id="GO:0070996">
    <property type="term" value="F:type 1 melanocortin receptor binding"/>
    <property type="evidence" value="ECO:0000353"/>
    <property type="project" value="BHF-UCL"/>
</dbReference>
<dbReference type="GO" id="GO:0031781">
    <property type="term" value="F:type 3 melanocortin receptor binding"/>
    <property type="evidence" value="ECO:0000353"/>
    <property type="project" value="BHF-UCL"/>
</dbReference>
<dbReference type="GO" id="GO:0031782">
    <property type="term" value="F:type 4 melanocortin receptor binding"/>
    <property type="evidence" value="ECO:0000353"/>
    <property type="project" value="BHF-UCL"/>
</dbReference>
<dbReference type="GO" id="GO:0031783">
    <property type="term" value="F:type 5 melanocortin receptor binding"/>
    <property type="evidence" value="ECO:0000353"/>
    <property type="project" value="BHF-UCL"/>
</dbReference>
<dbReference type="GO" id="GO:0106072">
    <property type="term" value="P:negative regulation of adenylate cyclase-activating G protein-coupled receptor signaling pathway"/>
    <property type="evidence" value="ECO:0000314"/>
    <property type="project" value="BHF-UCL"/>
</dbReference>
<dbReference type="GO" id="GO:1903077">
    <property type="term" value="P:negative regulation of protein localization to plasma membrane"/>
    <property type="evidence" value="ECO:0000314"/>
    <property type="project" value="BHF-UCL"/>
</dbReference>
<dbReference type="GO" id="GO:0106071">
    <property type="term" value="P:positive regulation of adenylate cyclase-activating G protein-coupled receptor signaling pathway"/>
    <property type="evidence" value="ECO:0000314"/>
    <property type="project" value="BHF-UCL"/>
</dbReference>
<dbReference type="GO" id="GO:0072659">
    <property type="term" value="P:protein localization to plasma membrane"/>
    <property type="evidence" value="ECO:0000314"/>
    <property type="project" value="BHF-UCL"/>
</dbReference>
<dbReference type="GO" id="GO:0106070">
    <property type="term" value="P:regulation of adenylate cyclase-activating G protein-coupled receptor signaling pathway"/>
    <property type="evidence" value="ECO:0000318"/>
    <property type="project" value="GO_Central"/>
</dbReference>
<dbReference type="InterPro" id="IPR028111">
    <property type="entry name" value="MRAP"/>
</dbReference>
<dbReference type="PANTHER" id="PTHR28675:SF2">
    <property type="entry name" value="MELANOCORTIN-2 RECEPTOR ACCESSORY PROTEIN"/>
    <property type="match status" value="1"/>
</dbReference>
<dbReference type="PANTHER" id="PTHR28675">
    <property type="entry name" value="MELANOCORTIN-2 RECEPTOR ACCESSORY PROTEIN 2"/>
    <property type="match status" value="1"/>
</dbReference>
<dbReference type="Pfam" id="PF15183">
    <property type="entry name" value="MRAP"/>
    <property type="match status" value="1"/>
</dbReference>
<accession>Q8TCY5</accession>
<accession>Q5EBR3</accession>
<accession>Q8TDB7</accession>
<accession>Q8WXC1</accession>
<accession>Q8WXC2</accession>
<name>MRAP_HUMAN</name>
<gene>
    <name type="primary">MRAP</name>
    <name type="synonym">C21orf61</name>
    <name type="synonym">FALP</name>
</gene>
<feature type="chain" id="PRO_0000096570" description="Melanocortin-2 receptor accessory protein">
    <location>
        <begin position="1"/>
        <end position="172"/>
    </location>
</feature>
<feature type="transmembrane region" description="Helical" evidence="1">
    <location>
        <begin position="38"/>
        <end position="58"/>
    </location>
</feature>
<feature type="region of interest" description="Disordered" evidence="2">
    <location>
        <begin position="105"/>
        <end position="136"/>
    </location>
</feature>
<feature type="region of interest" description="Disordered" evidence="2">
    <location>
        <begin position="151"/>
        <end position="172"/>
    </location>
</feature>
<feature type="splice variant" id="VSP_003862" description="In isoform 3." evidence="6">
    <location>
        <begin position="1"/>
        <end position="59"/>
    </location>
</feature>
<feature type="splice variant" id="VSP_021020" description="In isoform 1." evidence="7">
    <original>M</original>
    <variation>MR</variation>
    <location>
        <position position="68"/>
    </location>
</feature>
<feature type="splice variant" id="VSP_003863" description="In isoform 2." evidence="7">
    <original>RNSPKHHQTCPWSHGLNLHLCIQKCLPCHREPL</original>
    <variation>SFNTDESLLHSEVLPQTRAISCDELQAPREEGAA</variation>
    <location>
        <begin position="69"/>
        <end position="101"/>
    </location>
</feature>
<feature type="splice variant" id="VSP_003864" description="In isoform 2." evidence="7">
    <location>
        <begin position="102"/>
        <end position="172"/>
    </location>
</feature>
<feature type="strand" evidence="9">
    <location>
        <begin position="18"/>
        <end position="20"/>
    </location>
</feature>
<feature type="turn" evidence="9">
    <location>
        <begin position="28"/>
        <end position="30"/>
    </location>
</feature>
<feature type="helix" evidence="9">
    <location>
        <begin position="37"/>
        <end position="62"/>
    </location>
</feature>
<keyword id="KW-0002">3D-structure</keyword>
<keyword id="KW-0025">Alternative splicing</keyword>
<keyword id="KW-1003">Cell membrane</keyword>
<keyword id="KW-0256">Endoplasmic reticulum</keyword>
<keyword id="KW-0472">Membrane</keyword>
<keyword id="KW-1185">Reference proteome</keyword>
<keyword id="KW-0812">Transmembrane</keyword>
<keyword id="KW-1133">Transmembrane helix</keyword>
<comment type="function">
    <text evidence="3 4 5">Modulator of melanocortin receptors (MC1R, MC2R, MC3R, MC4R and MC5R). Acts by increasing ligand-sensitivity of melanocortin receptors and enhancing generation of cAMP by the receptors. Required both for MC2R trafficking to the cell surface of adrenal cells and for signaling in response to corticotropin (ACTH). May be involved in the intracellular trafficking pathways in adipocyte cells.</text>
</comment>
<comment type="subunit">
    <text evidence="3 4 5">Homodimer and heterodimer. Forms antiparallel homodimers and heterodimers with MRAP2. Interacts with MC1R, MC2R, MC3R, MC4R and MC5R.</text>
</comment>
<comment type="interaction">
    <interactant intactId="EBI-9538727">
        <id>Q8TCY5</id>
    </interactant>
    <interactant intactId="EBI-25837549">
        <id>P28329-3</id>
        <label>CHAT</label>
    </interactant>
    <organismsDiffer>false</organismsDiffer>
    <experiments>3</experiments>
</comment>
<comment type="interaction">
    <interactant intactId="EBI-9538727">
        <id>Q8TCY5</id>
    </interactant>
    <interactant intactId="EBI-348399">
        <id>P22607</id>
        <label>FGFR3</label>
    </interactant>
    <organismsDiffer>false</organismsDiffer>
    <experiments>3</experiments>
</comment>
<comment type="interaction">
    <interactant intactId="EBI-9538727">
        <id>Q8TCY5</id>
    </interactant>
    <interactant intactId="EBI-9538513">
        <id>Q01726</id>
        <label>MC1R</label>
    </interactant>
    <organismsDiffer>false</organismsDiffer>
    <experiments>2</experiments>
</comment>
<comment type="interaction">
    <interactant intactId="EBI-9538727">
        <id>Q8TCY5</id>
    </interactant>
    <interactant intactId="EBI-9537171">
        <id>Q01718</id>
        <label>MC2R</label>
    </interactant>
    <organismsDiffer>false</organismsDiffer>
    <experiments>3</experiments>
</comment>
<comment type="interaction">
    <interactant intactId="EBI-9538727">
        <id>Q8TCY5</id>
    </interactant>
    <interactant intactId="EBI-9538510">
        <id>P41968</id>
        <label>MC3R</label>
    </interactant>
    <organismsDiffer>false</organismsDiffer>
    <experiments>2</experiments>
</comment>
<comment type="interaction">
    <interactant intactId="EBI-9538727">
        <id>Q8TCY5</id>
    </interactant>
    <interactant intactId="EBI-3910694">
        <id>P32245</id>
        <label>MC4R</label>
    </interactant>
    <organismsDiffer>false</organismsDiffer>
    <experiments>2</experiments>
</comment>
<comment type="interaction">
    <interactant intactId="EBI-9538727">
        <id>Q8TCY5</id>
    </interactant>
    <interactant intactId="EBI-9538507">
        <id>P33032</id>
        <label>MC5R</label>
    </interactant>
    <organismsDiffer>false</organismsDiffer>
    <experiments>2</experiments>
</comment>
<comment type="interaction">
    <interactant intactId="EBI-9538727">
        <id>Q8TCY5</id>
    </interactant>
    <interactant intactId="EBI-9538727">
        <id>Q8TCY5</id>
        <label>MRAP</label>
    </interactant>
    <organismsDiffer>false</organismsDiffer>
    <experiments>2</experiments>
</comment>
<comment type="interaction">
    <interactant intactId="EBI-9538727">
        <id>Q8TCY5</id>
    </interactant>
    <interactant intactId="EBI-9537218">
        <id>Q96G30</id>
        <label>MRAP2</label>
    </interactant>
    <organismsDiffer>false</organismsDiffer>
    <experiments>3</experiments>
</comment>
<comment type="interaction">
    <interactant intactId="EBI-21991233">
        <id>Q8TCY5-1</id>
    </interactant>
    <interactant intactId="EBI-9537171">
        <id>Q01718</id>
        <label>MC2R</label>
    </interactant>
    <organismsDiffer>false</organismsDiffer>
    <experiments>3</experiments>
</comment>
<comment type="subcellular location">
    <subcellularLocation>
        <location evidence="3">Cell membrane</location>
        <topology evidence="3">Single-pass membrane protein</topology>
    </subcellularLocation>
    <subcellularLocation>
        <location evidence="3">Endoplasmic reticulum membrane</location>
        <topology evidence="3">Single-pass membrane protein</topology>
    </subcellularLocation>
    <text evidence="5">The formation of antiparallel homo- and heterodimers suggest that N- and C-terminus can both localize in the cytoplasmic and extracellular parts, depending on the context (PubMed:20371771). Upon insulin stimulation, it is redistributed into spotty structures throughout the cytoplasm.</text>
</comment>
<comment type="alternative products">
    <event type="alternative splicing"/>
    <isoform>
        <id>Q8TCY5-4</id>
        <name>4</name>
        <sequence type="displayed"/>
    </isoform>
    <isoform>
        <id>Q8TCY5-1</id>
        <name>1</name>
        <name>Alpha</name>
        <name>MRAP-alpha</name>
        <sequence type="described" ref="VSP_021020"/>
    </isoform>
    <isoform>
        <id>Q8TCY5-2</id>
        <name>2</name>
        <name>Beta</name>
        <name>MRAP-beta</name>
        <sequence type="described" ref="VSP_003863 VSP_003864"/>
    </isoform>
    <isoform>
        <id>Q8TCY5-3</id>
        <name>3</name>
        <name>Short</name>
        <sequence type="described" ref="VSP_003862"/>
    </isoform>
</comment>
<comment type="tissue specificity">
    <text evidence="3">Expressed in adrenal cortex, testis, breast, thyroid, lymph node, ovary and fat. Expressed in adipose tissues.</text>
</comment>
<comment type="disease" evidence="3">
    <disease id="DI-01670">
        <name>Glucocorticoid deficiency 2</name>
        <acronym>GCCD2</acronym>
        <description>A form of glucocorticoid deficiency, a rare autosomal recessive disorder characterized by resistance to ACTH action on the adrenal cortex, adrenal insufficiency and an inability of the adrenal cortex to produce cortisol. It usually presents in the neonatal period or in early childhood with episodes of hypoglycemia and other symptoms related to cortisol deficiency, including failure to thrive, recurrent illnesses or infections, convulsions, and shock. In a small number of patients hypoglycemia can be sufficiently severe and persistent that it leads to serious long-term neurological damage or death. The diagnosis is readily confirmed with a low plasma cortisol measurement in the presence of an elevated ACTH level, and normal aldosterone and plasma renin measurements.</description>
        <dbReference type="MIM" id="607398"/>
    </disease>
    <text>The disease is caused by variants affecting the gene represented in this entry.</text>
</comment>
<comment type="similarity">
    <text evidence="8">Belongs to the MRAP family.</text>
</comment>
<organism>
    <name type="scientific">Homo sapiens</name>
    <name type="common">Human</name>
    <dbReference type="NCBI Taxonomy" id="9606"/>
    <lineage>
        <taxon>Eukaryota</taxon>
        <taxon>Metazoa</taxon>
        <taxon>Chordata</taxon>
        <taxon>Craniata</taxon>
        <taxon>Vertebrata</taxon>
        <taxon>Euteleostomi</taxon>
        <taxon>Mammalia</taxon>
        <taxon>Eutheria</taxon>
        <taxon>Euarchontoglires</taxon>
        <taxon>Primates</taxon>
        <taxon>Haplorrhini</taxon>
        <taxon>Catarrhini</taxon>
        <taxon>Hominidae</taxon>
        <taxon>Homo</taxon>
    </lineage>
</organism>
<proteinExistence type="evidence at protein level"/>
<sequence length="172" mass="19136">MANGTNASAPYYSYEYYLDYLDLIPVDEKKLKAHKHSIVIAFWVSLAAFVVLLFLILLYMSWSASPQMRNSPKHHQTCPWSHGLNLHLCIQKCLPCHREPLATSQAQASSVEPGSRTGPDQPLRQESSSTLPLGGFQTHPTLLWELTLNGGPLVRSKPSEPPPGDRTSQLQS</sequence>
<reference key="1">
    <citation type="journal article" date="2002" name="Biochem. Biophys. Res. Commun.">
        <title>Identification of novel putative membrane proteins selectively expressed during adipose conversion of 3T3-L1 cells.</title>
        <authorList>
            <person name="Xu A."/>
            <person name="Choi K.-L."/>
            <person name="Wang Y."/>
            <person name="Permana P.A."/>
            <person name="Xu L.Y."/>
            <person name="Bogardus C."/>
            <person name="Cooper G.J.S."/>
        </authorList>
    </citation>
    <scope>NUCLEOTIDE SEQUENCE [MRNA] (ISOFORMS 1 AND 2)</scope>
    <source>
        <tissue>Adipocyte</tissue>
    </source>
</reference>
<reference key="2">
    <citation type="journal article" date="2002" name="Genomics">
        <title>Annotation of human chromosome 21 for relevance to Down syndrome: gene structure and expression analysis.</title>
        <authorList>
            <person name="Gardiner K."/>
            <person name="Slavov D."/>
            <person name="Bechtel L."/>
            <person name="Davisson M."/>
        </authorList>
    </citation>
    <scope>NUCLEOTIDE SEQUENCE [MRNA] (ISOFORMS 3 AND 4)</scope>
    <source>
        <tissue>Brain</tissue>
    </source>
</reference>
<reference key="3">
    <citation type="journal article" date="2004" name="Genome Res.">
        <title>The status, quality, and expansion of the NIH full-length cDNA project: the Mammalian Gene Collection (MGC).</title>
        <authorList>
            <consortium name="The MGC Project Team"/>
        </authorList>
    </citation>
    <scope>NUCLEOTIDE SEQUENCE [LARGE SCALE MRNA] (ISOFORM 4)</scope>
    <source>
        <tissue>Thyroid</tissue>
    </source>
</reference>
<reference key="4">
    <citation type="journal article" date="2009" name="Proc. Natl. Acad. Sci. U.S.A.">
        <title>MRAP and MRAP2 are bidirectional regulators of the melanocortin receptor family.</title>
        <authorList>
            <person name="Chan L.F."/>
            <person name="Webb T.R."/>
            <person name="Chung T.T."/>
            <person name="Meimaridou E."/>
            <person name="Cooray S.N."/>
            <person name="Guasti L."/>
            <person name="Chapple J.P."/>
            <person name="Egertova M."/>
            <person name="Elphick M.R."/>
            <person name="Cheetham M.E."/>
            <person name="Metherell L.A."/>
            <person name="Clark A.J."/>
        </authorList>
    </citation>
    <scope>FUNCTION</scope>
    <scope>SUBUNIT</scope>
    <scope>INTERACTION WITH MC1R; MC2R; MC3R; MC4R; MC5R AND MRAP2</scope>
</reference>
<reference key="5">
    <citation type="journal article" date="2010" name="Sci. Signal.">
        <title>Regulation of G protein-coupled receptor signaling: specific dominant-negative effects of melanocortin 2 receptor accessory protein 2.</title>
        <authorList>
            <person name="Sebag J.A."/>
            <person name="Hinkle P.M."/>
        </authorList>
    </citation>
    <scope>FUNCTION</scope>
    <scope>SUBUNIT</scope>
    <scope>TOPOLOGY</scope>
    <scope>INTERACTION WITH MC2R AND MRAP2</scope>
</reference>
<reference key="6">
    <citation type="journal article" date="2005" name="Nat. Genet.">
        <title>Mutations in MRAP, encoding a new interacting partner of the ACTH receptor, cause familial glucocorticoid deficiency type 2.</title>
        <authorList>
            <person name="Metherell L.A."/>
            <person name="Chapple J.P."/>
            <person name="Cooray S."/>
            <person name="David A."/>
            <person name="Becker C."/>
            <person name="Rueschendorf F."/>
            <person name="Naville D."/>
            <person name="Begeot M."/>
            <person name="Khoo B."/>
            <person name="Nuernberg P."/>
            <person name="Huebner A."/>
            <person name="Cheetham M.E."/>
            <person name="Clark A.J.L."/>
        </authorList>
    </citation>
    <scope>INVOLVEMENT IN GCCD2</scope>
    <scope>FUNCTION</scope>
    <scope>SUBCELLULAR LOCATION</scope>
    <scope>TISSUE SPECIFICITY</scope>
    <scope>INTERACTION WITH MC2R</scope>
</reference>
<protein>
    <recommendedName>
        <fullName>Melanocortin-2 receptor accessory protein</fullName>
    </recommendedName>
    <alternativeName>
        <fullName>B27</fullName>
    </alternativeName>
    <alternativeName>
        <fullName>Fat cell-specific low molecular weight protein</fullName>
    </alternativeName>
    <alternativeName>
        <fullName>Fat tissue-specific low MW protein</fullName>
    </alternativeName>
</protein>